<proteinExistence type="inferred from homology"/>
<reference key="1">
    <citation type="submission" date="2007-02" db="EMBL/GenBank/DDBJ databases">
        <title>Complete sequence of Mycobacterium sp. JLS.</title>
        <authorList>
            <consortium name="US DOE Joint Genome Institute"/>
            <person name="Copeland A."/>
            <person name="Lucas S."/>
            <person name="Lapidus A."/>
            <person name="Barry K."/>
            <person name="Detter J.C."/>
            <person name="Glavina del Rio T."/>
            <person name="Hammon N."/>
            <person name="Israni S."/>
            <person name="Dalin E."/>
            <person name="Tice H."/>
            <person name="Pitluck S."/>
            <person name="Chain P."/>
            <person name="Malfatti S."/>
            <person name="Shin M."/>
            <person name="Vergez L."/>
            <person name="Schmutz J."/>
            <person name="Larimer F."/>
            <person name="Land M."/>
            <person name="Hauser L."/>
            <person name="Kyrpides N."/>
            <person name="Mikhailova N."/>
            <person name="Miller C.D."/>
            <person name="Anderson A.J."/>
            <person name="Sims R.C."/>
            <person name="Richardson P."/>
        </authorList>
    </citation>
    <scope>NUCLEOTIDE SEQUENCE [LARGE SCALE GENOMIC DNA]</scope>
    <source>
        <strain>JLS</strain>
    </source>
</reference>
<name>DXS_MYCSJ</name>
<keyword id="KW-0414">Isoprene biosynthesis</keyword>
<keyword id="KW-0460">Magnesium</keyword>
<keyword id="KW-0479">Metal-binding</keyword>
<keyword id="KW-0784">Thiamine biosynthesis</keyword>
<keyword id="KW-0786">Thiamine pyrophosphate</keyword>
<keyword id="KW-0808">Transferase</keyword>
<organism>
    <name type="scientific">Mycobacterium sp. (strain JLS)</name>
    <dbReference type="NCBI Taxonomy" id="164757"/>
    <lineage>
        <taxon>Bacteria</taxon>
        <taxon>Bacillati</taxon>
        <taxon>Actinomycetota</taxon>
        <taxon>Actinomycetes</taxon>
        <taxon>Mycobacteriales</taxon>
        <taxon>Mycobacteriaceae</taxon>
        <taxon>Mycobacterium</taxon>
    </lineage>
</organism>
<gene>
    <name evidence="1" type="primary">dxs</name>
    <name type="ordered locus">Mjls_2197</name>
</gene>
<feature type="chain" id="PRO_1000019042" description="1-deoxy-D-xylulose-5-phosphate synthase">
    <location>
        <begin position="1"/>
        <end position="638"/>
    </location>
</feature>
<feature type="binding site" evidence="1">
    <location>
        <position position="71"/>
    </location>
    <ligand>
        <name>thiamine diphosphate</name>
        <dbReference type="ChEBI" id="CHEBI:58937"/>
    </ligand>
</feature>
<feature type="binding site" evidence="1">
    <location>
        <begin position="112"/>
        <end position="114"/>
    </location>
    <ligand>
        <name>thiamine diphosphate</name>
        <dbReference type="ChEBI" id="CHEBI:58937"/>
    </ligand>
</feature>
<feature type="binding site" evidence="1">
    <location>
        <position position="144"/>
    </location>
    <ligand>
        <name>Mg(2+)</name>
        <dbReference type="ChEBI" id="CHEBI:18420"/>
    </ligand>
</feature>
<feature type="binding site" evidence="1">
    <location>
        <begin position="145"/>
        <end position="146"/>
    </location>
    <ligand>
        <name>thiamine diphosphate</name>
        <dbReference type="ChEBI" id="CHEBI:58937"/>
    </ligand>
</feature>
<feature type="binding site" evidence="1">
    <location>
        <position position="173"/>
    </location>
    <ligand>
        <name>Mg(2+)</name>
        <dbReference type="ChEBI" id="CHEBI:18420"/>
    </ligand>
</feature>
<feature type="binding site" evidence="1">
    <location>
        <position position="173"/>
    </location>
    <ligand>
        <name>thiamine diphosphate</name>
        <dbReference type="ChEBI" id="CHEBI:58937"/>
    </ligand>
</feature>
<feature type="binding site" evidence="1">
    <location>
        <position position="284"/>
    </location>
    <ligand>
        <name>thiamine diphosphate</name>
        <dbReference type="ChEBI" id="CHEBI:58937"/>
    </ligand>
</feature>
<feature type="binding site" evidence="1">
    <location>
        <position position="365"/>
    </location>
    <ligand>
        <name>thiamine diphosphate</name>
        <dbReference type="ChEBI" id="CHEBI:58937"/>
    </ligand>
</feature>
<comment type="function">
    <text evidence="1">Catalyzes the acyloin condensation reaction between C atoms 2 and 3 of pyruvate and glyceraldehyde 3-phosphate to yield 1-deoxy-D-xylulose-5-phosphate (DXP).</text>
</comment>
<comment type="catalytic activity">
    <reaction evidence="1">
        <text>D-glyceraldehyde 3-phosphate + pyruvate + H(+) = 1-deoxy-D-xylulose 5-phosphate + CO2</text>
        <dbReference type="Rhea" id="RHEA:12605"/>
        <dbReference type="ChEBI" id="CHEBI:15361"/>
        <dbReference type="ChEBI" id="CHEBI:15378"/>
        <dbReference type="ChEBI" id="CHEBI:16526"/>
        <dbReference type="ChEBI" id="CHEBI:57792"/>
        <dbReference type="ChEBI" id="CHEBI:59776"/>
        <dbReference type="EC" id="2.2.1.7"/>
    </reaction>
</comment>
<comment type="cofactor">
    <cofactor evidence="1">
        <name>Mg(2+)</name>
        <dbReference type="ChEBI" id="CHEBI:18420"/>
    </cofactor>
    <text evidence="1">Binds 1 Mg(2+) ion per subunit.</text>
</comment>
<comment type="cofactor">
    <cofactor evidence="1">
        <name>thiamine diphosphate</name>
        <dbReference type="ChEBI" id="CHEBI:58937"/>
    </cofactor>
    <text evidence="1">Binds 1 thiamine pyrophosphate per subunit.</text>
</comment>
<comment type="pathway">
    <text evidence="1">Metabolic intermediate biosynthesis; 1-deoxy-D-xylulose 5-phosphate biosynthesis; 1-deoxy-D-xylulose 5-phosphate from D-glyceraldehyde 3-phosphate and pyruvate: step 1/1.</text>
</comment>
<comment type="subunit">
    <text evidence="1">Homodimer.</text>
</comment>
<comment type="similarity">
    <text evidence="1">Belongs to the transketolase family. DXPS subfamily.</text>
</comment>
<evidence type="ECO:0000255" key="1">
    <source>
        <dbReference type="HAMAP-Rule" id="MF_00315"/>
    </source>
</evidence>
<sequence>MLEQIRGPADLQHLSQSALSELAGEIRQFLIHKVAATGGHLGPNLGVVELTLALHRVFDSPHDPLIFDTGHQAYVHKMLTGRSHEFDSLRKKDGLSGYPSRSESEHDWVESSHASAALSYADGLAKAFELTGHRNRHVVAVVGDGALTGGMCWEALNNIAAARRPVVIVVNDNGRSYAPTIGGFADHLAALRLQPGYERVLEEGRKAVRGLPVIGEFCYQCMHSVKAGIKDALSPQVMFTDLGLKYVGPIDGHDEHAVESALRHARGFNAPVIVHVVTRKGMGYAPAENDEAEQMHACGVIDVATGRATMVAAPGWTSSFSEALIDYGAKRRDIVAITAAMPGPTGLSAFRDRFPDRFFDVGIAEQHAMTSAAGLAMGGLHPVVAIYSTFLNRAFDQLMMDVALHKLPVTLVLDRSGVTGPDGASHNGMWDLSVLGIVPGMRVAAPRDGARLREELGEALDVNDAPTAIRFPKGDVGEDIPAVRRHRGVDVLAEPADGLSDDVLLVAVGPFASMALTVAERLRKQGIGVTVVDPRWVLPVPEVLTEFAAAHKLVVTVEDNGLHGGIGSSVSAALRHAEVDVPCRDVGLPQQFFDHASRGEVLADVGVTDRNISRQITGWVAALGATPADADEVSERLD</sequence>
<dbReference type="EC" id="2.2.1.7" evidence="1"/>
<dbReference type="EMBL" id="CP000580">
    <property type="protein sequence ID" value="ABN97983.1"/>
    <property type="molecule type" value="Genomic_DNA"/>
</dbReference>
<dbReference type="SMR" id="A3PYK6"/>
<dbReference type="KEGG" id="mjl:Mjls_2197"/>
<dbReference type="HOGENOM" id="CLU_009227_1_4_11"/>
<dbReference type="BioCyc" id="MSP164757:G1G8C-2217-MONOMER"/>
<dbReference type="UniPathway" id="UPA00064">
    <property type="reaction ID" value="UER00091"/>
</dbReference>
<dbReference type="GO" id="GO:0005829">
    <property type="term" value="C:cytosol"/>
    <property type="evidence" value="ECO:0007669"/>
    <property type="project" value="TreeGrafter"/>
</dbReference>
<dbReference type="GO" id="GO:0008661">
    <property type="term" value="F:1-deoxy-D-xylulose-5-phosphate synthase activity"/>
    <property type="evidence" value="ECO:0007669"/>
    <property type="project" value="UniProtKB-UniRule"/>
</dbReference>
<dbReference type="GO" id="GO:0000287">
    <property type="term" value="F:magnesium ion binding"/>
    <property type="evidence" value="ECO:0007669"/>
    <property type="project" value="UniProtKB-UniRule"/>
</dbReference>
<dbReference type="GO" id="GO:0030976">
    <property type="term" value="F:thiamine pyrophosphate binding"/>
    <property type="evidence" value="ECO:0007669"/>
    <property type="project" value="UniProtKB-UniRule"/>
</dbReference>
<dbReference type="GO" id="GO:0052865">
    <property type="term" value="P:1-deoxy-D-xylulose 5-phosphate biosynthetic process"/>
    <property type="evidence" value="ECO:0007669"/>
    <property type="project" value="UniProtKB-UniPathway"/>
</dbReference>
<dbReference type="GO" id="GO:0019288">
    <property type="term" value="P:isopentenyl diphosphate biosynthetic process, methylerythritol 4-phosphate pathway"/>
    <property type="evidence" value="ECO:0007669"/>
    <property type="project" value="TreeGrafter"/>
</dbReference>
<dbReference type="GO" id="GO:0016114">
    <property type="term" value="P:terpenoid biosynthetic process"/>
    <property type="evidence" value="ECO:0007669"/>
    <property type="project" value="UniProtKB-UniRule"/>
</dbReference>
<dbReference type="GO" id="GO:0009228">
    <property type="term" value="P:thiamine biosynthetic process"/>
    <property type="evidence" value="ECO:0007669"/>
    <property type="project" value="UniProtKB-UniRule"/>
</dbReference>
<dbReference type="CDD" id="cd02007">
    <property type="entry name" value="TPP_DXS"/>
    <property type="match status" value="1"/>
</dbReference>
<dbReference type="CDD" id="cd07033">
    <property type="entry name" value="TPP_PYR_DXS_TK_like"/>
    <property type="match status" value="1"/>
</dbReference>
<dbReference type="FunFam" id="3.40.50.920:FF:000002">
    <property type="entry name" value="1-deoxy-D-xylulose-5-phosphate synthase"/>
    <property type="match status" value="1"/>
</dbReference>
<dbReference type="FunFam" id="3.40.50.970:FF:000005">
    <property type="entry name" value="1-deoxy-D-xylulose-5-phosphate synthase"/>
    <property type="match status" value="1"/>
</dbReference>
<dbReference type="Gene3D" id="3.40.50.920">
    <property type="match status" value="1"/>
</dbReference>
<dbReference type="Gene3D" id="3.40.50.970">
    <property type="match status" value="2"/>
</dbReference>
<dbReference type="HAMAP" id="MF_00315">
    <property type="entry name" value="DXP_synth"/>
    <property type="match status" value="1"/>
</dbReference>
<dbReference type="InterPro" id="IPR005477">
    <property type="entry name" value="Dxylulose-5-P_synthase"/>
</dbReference>
<dbReference type="InterPro" id="IPR029061">
    <property type="entry name" value="THDP-binding"/>
</dbReference>
<dbReference type="InterPro" id="IPR009014">
    <property type="entry name" value="Transketo_C/PFOR_II"/>
</dbReference>
<dbReference type="InterPro" id="IPR005475">
    <property type="entry name" value="Transketolase-like_Pyr-bd"/>
</dbReference>
<dbReference type="InterPro" id="IPR020826">
    <property type="entry name" value="Transketolase_BS"/>
</dbReference>
<dbReference type="InterPro" id="IPR033248">
    <property type="entry name" value="Transketolase_C"/>
</dbReference>
<dbReference type="InterPro" id="IPR049557">
    <property type="entry name" value="Transketolase_CS"/>
</dbReference>
<dbReference type="NCBIfam" id="TIGR00204">
    <property type="entry name" value="dxs"/>
    <property type="match status" value="1"/>
</dbReference>
<dbReference type="NCBIfam" id="NF003933">
    <property type="entry name" value="PRK05444.2-2"/>
    <property type="match status" value="1"/>
</dbReference>
<dbReference type="PANTHER" id="PTHR43322">
    <property type="entry name" value="1-D-DEOXYXYLULOSE 5-PHOSPHATE SYNTHASE-RELATED"/>
    <property type="match status" value="1"/>
</dbReference>
<dbReference type="PANTHER" id="PTHR43322:SF5">
    <property type="entry name" value="1-DEOXY-D-XYLULOSE-5-PHOSPHATE SYNTHASE, CHLOROPLASTIC"/>
    <property type="match status" value="1"/>
</dbReference>
<dbReference type="Pfam" id="PF13292">
    <property type="entry name" value="DXP_synthase_N"/>
    <property type="match status" value="1"/>
</dbReference>
<dbReference type="Pfam" id="PF02779">
    <property type="entry name" value="Transket_pyr"/>
    <property type="match status" value="1"/>
</dbReference>
<dbReference type="Pfam" id="PF02780">
    <property type="entry name" value="Transketolase_C"/>
    <property type="match status" value="1"/>
</dbReference>
<dbReference type="SMART" id="SM00861">
    <property type="entry name" value="Transket_pyr"/>
    <property type="match status" value="1"/>
</dbReference>
<dbReference type="SUPFAM" id="SSF52518">
    <property type="entry name" value="Thiamin diphosphate-binding fold (THDP-binding)"/>
    <property type="match status" value="2"/>
</dbReference>
<dbReference type="SUPFAM" id="SSF52922">
    <property type="entry name" value="TK C-terminal domain-like"/>
    <property type="match status" value="1"/>
</dbReference>
<dbReference type="PROSITE" id="PS00801">
    <property type="entry name" value="TRANSKETOLASE_1"/>
    <property type="match status" value="1"/>
</dbReference>
<dbReference type="PROSITE" id="PS00802">
    <property type="entry name" value="TRANSKETOLASE_2"/>
    <property type="match status" value="1"/>
</dbReference>
<protein>
    <recommendedName>
        <fullName evidence="1">1-deoxy-D-xylulose-5-phosphate synthase</fullName>
        <ecNumber evidence="1">2.2.1.7</ecNumber>
    </recommendedName>
    <alternativeName>
        <fullName evidence="1">1-deoxyxylulose-5-phosphate synthase</fullName>
        <shortName evidence="1">DXP synthase</shortName>
        <shortName evidence="1">DXPS</shortName>
    </alternativeName>
</protein>
<accession>A3PYK6</accession>